<keyword id="KW-1003">Cell membrane</keyword>
<keyword id="KW-0966">Cell projection</keyword>
<keyword id="KW-0969">Cilium</keyword>
<keyword id="KW-0282">Flagellum</keyword>
<keyword id="KW-0325">Glycoprotein</keyword>
<keyword id="KW-0472">Membrane</keyword>
<keyword id="KW-0496">Mitochondrion</keyword>
<keyword id="KW-0999">Mitochondrion inner membrane</keyword>
<keyword id="KW-1185">Reference proteome</keyword>
<keyword id="KW-0812">Transmembrane</keyword>
<keyword id="KW-1133">Transmembrane helix</keyword>
<keyword id="KW-0813">Transport</keyword>
<reference key="1">
    <citation type="journal article" date="1998" name="Cytogenet. Cell Genet.">
        <title>Molecular cloning, mapping, and characterization of two novel human genes, ORCTL3 and ORCTL4, bearing homology to organic-cation transporters.</title>
        <authorList>
            <person name="Nishiwaki T."/>
            <person name="Daigo Y."/>
            <person name="Tamari M."/>
            <person name="Fujii Y."/>
            <person name="Nakamura Y."/>
        </authorList>
    </citation>
    <scope>NUCLEOTIDE SEQUENCE [MRNA]</scope>
    <scope>TISSUE SPECIFICITY</scope>
    <scope>VARIANTS THR-144; MET-284 AND GLY-292</scope>
</reference>
<reference key="2">
    <citation type="journal article" date="1999" name="DNA Res.">
        <title>Characterization of a 1200-kb genomic segment of chromosome 3p22-p21.3.</title>
        <authorList>
            <person name="Daigo Y."/>
            <person name="Isomura M."/>
            <person name="Nishiwaki T."/>
            <person name="Tamari M."/>
            <person name="Ishikawa S."/>
            <person name="Kai M."/>
            <person name="Takeuchi K."/>
            <person name="Yamane Y."/>
            <person name="Hayashi R."/>
            <person name="Minami M."/>
            <person name="Fujino M.A."/>
            <person name="Hojo Y."/>
            <person name="Uchiyama I."/>
            <person name="Takagi T."/>
            <person name="Nakamura Y."/>
        </authorList>
    </citation>
    <scope>NUCLEOTIDE SEQUENCE [GENOMIC DNA]</scope>
    <scope>VARIANTS THR-144; MET-284 AND GLY-292</scope>
</reference>
<reference key="3">
    <citation type="journal article" date="2004" name="Nat. Genet.">
        <title>Complete sequencing and characterization of 21,243 full-length human cDNAs.</title>
        <authorList>
            <person name="Ota T."/>
            <person name="Suzuki Y."/>
            <person name="Nishikawa T."/>
            <person name="Otsuki T."/>
            <person name="Sugiyama T."/>
            <person name="Irie R."/>
            <person name="Wakamatsu A."/>
            <person name="Hayashi K."/>
            <person name="Sato H."/>
            <person name="Nagai K."/>
            <person name="Kimura K."/>
            <person name="Makita H."/>
            <person name="Sekine M."/>
            <person name="Obayashi M."/>
            <person name="Nishi T."/>
            <person name="Shibahara T."/>
            <person name="Tanaka T."/>
            <person name="Ishii S."/>
            <person name="Yamamoto J."/>
            <person name="Saito K."/>
            <person name="Kawai Y."/>
            <person name="Isono Y."/>
            <person name="Nakamura Y."/>
            <person name="Nagahari K."/>
            <person name="Murakami K."/>
            <person name="Yasuda T."/>
            <person name="Iwayanagi T."/>
            <person name="Wagatsuma M."/>
            <person name="Shiratori A."/>
            <person name="Sudo H."/>
            <person name="Hosoiri T."/>
            <person name="Kaku Y."/>
            <person name="Kodaira H."/>
            <person name="Kondo H."/>
            <person name="Sugawara M."/>
            <person name="Takahashi M."/>
            <person name="Kanda K."/>
            <person name="Yokoi T."/>
            <person name="Furuya T."/>
            <person name="Kikkawa E."/>
            <person name="Omura Y."/>
            <person name="Abe K."/>
            <person name="Kamihara K."/>
            <person name="Katsuta N."/>
            <person name="Sato K."/>
            <person name="Tanikawa M."/>
            <person name="Yamazaki M."/>
            <person name="Ninomiya K."/>
            <person name="Ishibashi T."/>
            <person name="Yamashita H."/>
            <person name="Murakawa K."/>
            <person name="Fujimori K."/>
            <person name="Tanai H."/>
            <person name="Kimata M."/>
            <person name="Watanabe M."/>
            <person name="Hiraoka S."/>
            <person name="Chiba Y."/>
            <person name="Ishida S."/>
            <person name="Ono Y."/>
            <person name="Takiguchi S."/>
            <person name="Watanabe S."/>
            <person name="Yosida M."/>
            <person name="Hotuta T."/>
            <person name="Kusano J."/>
            <person name="Kanehori K."/>
            <person name="Takahashi-Fujii A."/>
            <person name="Hara H."/>
            <person name="Tanase T.-O."/>
            <person name="Nomura Y."/>
            <person name="Togiya S."/>
            <person name="Komai F."/>
            <person name="Hara R."/>
            <person name="Takeuchi K."/>
            <person name="Arita M."/>
            <person name="Imose N."/>
            <person name="Musashino K."/>
            <person name="Yuuki H."/>
            <person name="Oshima A."/>
            <person name="Sasaki N."/>
            <person name="Aotsuka S."/>
            <person name="Yoshikawa Y."/>
            <person name="Matsunawa H."/>
            <person name="Ichihara T."/>
            <person name="Shiohata N."/>
            <person name="Sano S."/>
            <person name="Moriya S."/>
            <person name="Momiyama H."/>
            <person name="Satoh N."/>
            <person name="Takami S."/>
            <person name="Terashima Y."/>
            <person name="Suzuki O."/>
            <person name="Nakagawa S."/>
            <person name="Senoh A."/>
            <person name="Mizoguchi H."/>
            <person name="Goto Y."/>
            <person name="Shimizu F."/>
            <person name="Wakebe H."/>
            <person name="Hishigaki H."/>
            <person name="Watanabe T."/>
            <person name="Sugiyama A."/>
            <person name="Takemoto M."/>
            <person name="Kawakami B."/>
            <person name="Yamazaki M."/>
            <person name="Watanabe K."/>
            <person name="Kumagai A."/>
            <person name="Itakura S."/>
            <person name="Fukuzumi Y."/>
            <person name="Fujimori Y."/>
            <person name="Komiyama M."/>
            <person name="Tashiro H."/>
            <person name="Tanigami A."/>
            <person name="Fujiwara T."/>
            <person name="Ono T."/>
            <person name="Yamada K."/>
            <person name="Fujii Y."/>
            <person name="Ozaki K."/>
            <person name="Hirao M."/>
            <person name="Ohmori Y."/>
            <person name="Kawabata A."/>
            <person name="Hikiji T."/>
            <person name="Kobatake N."/>
            <person name="Inagaki H."/>
            <person name="Ikema Y."/>
            <person name="Okamoto S."/>
            <person name="Okitani R."/>
            <person name="Kawakami T."/>
            <person name="Noguchi S."/>
            <person name="Itoh T."/>
            <person name="Shigeta K."/>
            <person name="Senba T."/>
            <person name="Matsumura K."/>
            <person name="Nakajima Y."/>
            <person name="Mizuno T."/>
            <person name="Morinaga M."/>
            <person name="Sasaki M."/>
            <person name="Togashi T."/>
            <person name="Oyama M."/>
            <person name="Hata H."/>
            <person name="Watanabe M."/>
            <person name="Komatsu T."/>
            <person name="Mizushima-Sugano J."/>
            <person name="Satoh T."/>
            <person name="Shirai Y."/>
            <person name="Takahashi Y."/>
            <person name="Nakagawa K."/>
            <person name="Okumura K."/>
            <person name="Nagase T."/>
            <person name="Nomura N."/>
            <person name="Kikuchi H."/>
            <person name="Masuho Y."/>
            <person name="Yamashita R."/>
            <person name="Nakai K."/>
            <person name="Yada T."/>
            <person name="Nakamura Y."/>
            <person name="Ohara O."/>
            <person name="Isogai T."/>
            <person name="Sugano S."/>
        </authorList>
    </citation>
    <scope>NUCLEOTIDE SEQUENCE [LARGE SCALE MRNA]</scope>
    <scope>VARIANTS MET-284; GLY-292 AND ARG-560</scope>
    <source>
        <tissue>Testis</tissue>
    </source>
</reference>
<reference key="4">
    <citation type="journal article" date="2006" name="Nature">
        <title>The DNA sequence, annotation and analysis of human chromosome 3.</title>
        <authorList>
            <person name="Muzny D.M."/>
            <person name="Scherer S.E."/>
            <person name="Kaul R."/>
            <person name="Wang J."/>
            <person name="Yu J."/>
            <person name="Sudbrak R."/>
            <person name="Buhay C.J."/>
            <person name="Chen R."/>
            <person name="Cree A."/>
            <person name="Ding Y."/>
            <person name="Dugan-Rocha S."/>
            <person name="Gill R."/>
            <person name="Gunaratne P."/>
            <person name="Harris R.A."/>
            <person name="Hawes A.C."/>
            <person name="Hernandez J."/>
            <person name="Hodgson A.V."/>
            <person name="Hume J."/>
            <person name="Jackson A."/>
            <person name="Khan Z.M."/>
            <person name="Kovar-Smith C."/>
            <person name="Lewis L.R."/>
            <person name="Lozado R.J."/>
            <person name="Metzker M.L."/>
            <person name="Milosavljevic A."/>
            <person name="Miner G.R."/>
            <person name="Morgan M.B."/>
            <person name="Nazareth L.V."/>
            <person name="Scott G."/>
            <person name="Sodergren E."/>
            <person name="Song X.-Z."/>
            <person name="Steffen D."/>
            <person name="Wei S."/>
            <person name="Wheeler D.A."/>
            <person name="Wright M.W."/>
            <person name="Worley K.C."/>
            <person name="Yuan Y."/>
            <person name="Zhang Z."/>
            <person name="Adams C.Q."/>
            <person name="Ansari-Lari M.A."/>
            <person name="Ayele M."/>
            <person name="Brown M.J."/>
            <person name="Chen G."/>
            <person name="Chen Z."/>
            <person name="Clendenning J."/>
            <person name="Clerc-Blankenburg K.P."/>
            <person name="Chen R."/>
            <person name="Chen Z."/>
            <person name="Davis C."/>
            <person name="Delgado O."/>
            <person name="Dinh H.H."/>
            <person name="Dong W."/>
            <person name="Draper H."/>
            <person name="Ernst S."/>
            <person name="Fu G."/>
            <person name="Gonzalez-Garay M.L."/>
            <person name="Garcia D.K."/>
            <person name="Gillett W."/>
            <person name="Gu J."/>
            <person name="Hao B."/>
            <person name="Haugen E."/>
            <person name="Havlak P."/>
            <person name="He X."/>
            <person name="Hennig S."/>
            <person name="Hu S."/>
            <person name="Huang W."/>
            <person name="Jackson L.R."/>
            <person name="Jacob L.S."/>
            <person name="Kelly S.H."/>
            <person name="Kube M."/>
            <person name="Levy R."/>
            <person name="Li Z."/>
            <person name="Liu B."/>
            <person name="Liu J."/>
            <person name="Liu W."/>
            <person name="Lu J."/>
            <person name="Maheshwari M."/>
            <person name="Nguyen B.-V."/>
            <person name="Okwuonu G.O."/>
            <person name="Palmeiri A."/>
            <person name="Pasternak S."/>
            <person name="Perez L.M."/>
            <person name="Phelps K.A."/>
            <person name="Plopper F.J."/>
            <person name="Qiang B."/>
            <person name="Raymond C."/>
            <person name="Rodriguez R."/>
            <person name="Saenphimmachak C."/>
            <person name="Santibanez J."/>
            <person name="Shen H."/>
            <person name="Shen Y."/>
            <person name="Subramanian S."/>
            <person name="Tabor P.E."/>
            <person name="Verduzco D."/>
            <person name="Waldron L."/>
            <person name="Wang J."/>
            <person name="Wang J."/>
            <person name="Wang Q."/>
            <person name="Williams G.A."/>
            <person name="Wong G.K.-S."/>
            <person name="Yao Z."/>
            <person name="Zhang J."/>
            <person name="Zhang X."/>
            <person name="Zhao G."/>
            <person name="Zhou J."/>
            <person name="Zhou Y."/>
            <person name="Nelson D."/>
            <person name="Lehrach H."/>
            <person name="Reinhardt R."/>
            <person name="Naylor S.L."/>
            <person name="Yang H."/>
            <person name="Olson M."/>
            <person name="Weinstock G."/>
            <person name="Gibbs R.A."/>
        </authorList>
    </citation>
    <scope>NUCLEOTIDE SEQUENCE [LARGE SCALE GENOMIC DNA]</scope>
</reference>
<reference key="5">
    <citation type="submission" date="2005-07" db="EMBL/GenBank/DDBJ databases">
        <authorList>
            <person name="Mural R.J."/>
            <person name="Istrail S."/>
            <person name="Sutton G.G."/>
            <person name="Florea L."/>
            <person name="Halpern A.L."/>
            <person name="Mobarry C.M."/>
            <person name="Lippert R."/>
            <person name="Walenz B."/>
            <person name="Shatkay H."/>
            <person name="Dew I."/>
            <person name="Miller J.R."/>
            <person name="Flanigan M.J."/>
            <person name="Edwards N.J."/>
            <person name="Bolanos R."/>
            <person name="Fasulo D."/>
            <person name="Halldorsson B.V."/>
            <person name="Hannenhalli S."/>
            <person name="Turner R."/>
            <person name="Yooseph S."/>
            <person name="Lu F."/>
            <person name="Nusskern D.R."/>
            <person name="Shue B.C."/>
            <person name="Zheng X.H."/>
            <person name="Zhong F."/>
            <person name="Delcher A.L."/>
            <person name="Huson D.H."/>
            <person name="Kravitz S.A."/>
            <person name="Mouchard L."/>
            <person name="Reinert K."/>
            <person name="Remington K.A."/>
            <person name="Clark A.G."/>
            <person name="Waterman M.S."/>
            <person name="Eichler E.E."/>
            <person name="Adams M.D."/>
            <person name="Hunkapiller M.W."/>
            <person name="Myers E.W."/>
            <person name="Venter J.C."/>
        </authorList>
    </citation>
    <scope>NUCLEOTIDE SEQUENCE [LARGE SCALE GENOMIC DNA]</scope>
    <scope>VARIANTS MET-284 AND GLY-292</scope>
</reference>
<reference key="6">
    <citation type="journal article" date="2004" name="Genome Res.">
        <title>The status, quality, and expansion of the NIH full-length cDNA project: the Mammalian Gene Collection (MGC).</title>
        <authorList>
            <consortium name="The MGC Project Team"/>
        </authorList>
    </citation>
    <scope>NUCLEOTIDE SEQUENCE [LARGE SCALE MRNA]</scope>
    <scope>VARIANTS MET-284; GLY-292 AND ARG-560</scope>
    <source>
        <tissue>Brain</tissue>
    </source>
</reference>
<reference key="7">
    <citation type="journal article" date="2021" name="Cell Rep.">
        <title>SLC22A14 is a mitochondrial riboflavin transporter required for sperm oxidative phosphorylation and male fertility.</title>
        <authorList>
            <person name="Kuang W."/>
            <person name="Zhang J."/>
            <person name="Lan Z."/>
            <person name="Deepak R.N.V.K."/>
            <person name="Liu C."/>
            <person name="Ma Z."/>
            <person name="Cheng L."/>
            <person name="Zhao X."/>
            <person name="Meng X."/>
            <person name="Wang W."/>
            <person name="Wang X."/>
            <person name="Xu L."/>
            <person name="Jiao Y."/>
            <person name="Luo Q."/>
            <person name="Meng Z."/>
            <person name="Kee K."/>
            <person name="Liu X."/>
            <person name="Deng H."/>
            <person name="Li W."/>
            <person name="Fan H."/>
            <person name="Chen L."/>
        </authorList>
    </citation>
    <scope>TRANSPORTER ACTIVITY</scope>
    <scope>SUBCELLULAR LOCATION</scope>
    <scope>MUTAGENESIS OF TRP-388; TYR-395 AND ARG-487</scope>
</reference>
<accession>Q9Y267</accession>
<accession>A0AVS9</accession>
<accession>A1L4H6</accession>
<accession>B2RCX3</accession>
<accession>Q6DJT3</accession>
<feature type="chain" id="PRO_0000230784" description="Solute carrier family 22 member 14">
    <location>
        <begin position="1"/>
        <end position="594"/>
    </location>
</feature>
<feature type="topological domain" description="Cytoplasmic" evidence="2">
    <location>
        <begin position="1"/>
        <end position="70"/>
    </location>
</feature>
<feature type="transmembrane region" description="Helical" evidence="2">
    <location>
        <begin position="71"/>
        <end position="91"/>
    </location>
</feature>
<feature type="topological domain" description="Extracellular" evidence="2">
    <location>
        <begin position="92"/>
        <end position="184"/>
    </location>
</feature>
<feature type="transmembrane region" description="Helical" evidence="2">
    <location>
        <begin position="185"/>
        <end position="205"/>
    </location>
</feature>
<feature type="topological domain" description="Cytoplasmic" evidence="2">
    <location>
        <begin position="206"/>
        <end position="210"/>
    </location>
</feature>
<feature type="transmembrane region" description="Helical" evidence="2">
    <location>
        <begin position="211"/>
        <end position="231"/>
    </location>
</feature>
<feature type="topological domain" description="Extracellular" evidence="2">
    <location>
        <begin position="232"/>
        <end position="235"/>
    </location>
</feature>
<feature type="transmembrane region" description="Helical" evidence="2">
    <location>
        <begin position="236"/>
        <end position="256"/>
    </location>
</feature>
<feature type="topological domain" description="Cytoplasmic" evidence="2">
    <location>
        <begin position="257"/>
        <end position="270"/>
    </location>
</feature>
<feature type="transmembrane region" description="Helical" evidence="2">
    <location>
        <begin position="271"/>
        <end position="291"/>
    </location>
</feature>
<feature type="topological domain" description="Extracellular" evidence="2">
    <location>
        <begin position="292"/>
        <end position="297"/>
    </location>
</feature>
<feature type="transmembrane region" description="Helical" evidence="2">
    <location>
        <begin position="298"/>
        <end position="318"/>
    </location>
</feature>
<feature type="topological domain" description="Cytoplasmic" evidence="2">
    <location>
        <begin position="319"/>
        <end position="379"/>
    </location>
</feature>
<feature type="transmembrane region" description="Helical" evidence="2">
    <location>
        <begin position="380"/>
        <end position="400"/>
    </location>
</feature>
<feature type="topological domain" description="Extracellular" evidence="2">
    <location>
        <begin position="401"/>
        <end position="408"/>
    </location>
</feature>
<feature type="transmembrane region" description="Helical" evidence="2">
    <location>
        <begin position="409"/>
        <end position="431"/>
    </location>
</feature>
<feature type="topological domain" description="Cytoplasmic" evidence="2">
    <location>
        <begin position="432"/>
        <end position="437"/>
    </location>
</feature>
<feature type="transmembrane region" description="Helical" evidence="2">
    <location>
        <begin position="438"/>
        <end position="458"/>
    </location>
</feature>
<feature type="topological domain" description="Extracellular" evidence="2">
    <location>
        <begin position="459"/>
        <end position="488"/>
    </location>
</feature>
<feature type="transmembrane region" description="Helical" evidence="2">
    <location>
        <begin position="489"/>
        <end position="509"/>
    </location>
</feature>
<feature type="topological domain" description="Cytoplasmic" evidence="2">
    <location>
        <begin position="510"/>
        <end position="512"/>
    </location>
</feature>
<feature type="transmembrane region" description="Helical" evidence="2">
    <location>
        <begin position="513"/>
        <end position="533"/>
    </location>
</feature>
<feature type="topological domain" description="Extracellular" evidence="2">
    <location>
        <begin position="534"/>
        <end position="538"/>
    </location>
</feature>
<feature type="transmembrane region" description="Helical" evidence="2">
    <location>
        <begin position="539"/>
        <end position="559"/>
    </location>
</feature>
<feature type="topological domain" description="Cytoplasmic" evidence="2">
    <location>
        <begin position="560"/>
        <end position="594"/>
    </location>
</feature>
<feature type="region of interest" description="Disordered" evidence="3">
    <location>
        <begin position="566"/>
        <end position="594"/>
    </location>
</feature>
<feature type="compositionally biased region" description="Polar residues" evidence="3">
    <location>
        <begin position="567"/>
        <end position="578"/>
    </location>
</feature>
<feature type="compositionally biased region" description="Basic and acidic residues" evidence="3">
    <location>
        <begin position="580"/>
        <end position="594"/>
    </location>
</feature>
<feature type="glycosylation site" description="N-linked (GlcNAc...) asparagine" evidence="2">
    <location>
        <position position="99"/>
    </location>
</feature>
<feature type="glycosylation site" description="N-linked (GlcNAc...) asparagine" evidence="2">
    <location>
        <position position="117"/>
    </location>
</feature>
<feature type="glycosylation site" description="N-linked (GlcNAc...) asparagine" evidence="2">
    <location>
        <position position="125"/>
    </location>
</feature>
<feature type="glycosylation site" description="N-linked (GlcNAc...) asparagine" evidence="2">
    <location>
        <position position="150"/>
    </location>
</feature>
<feature type="sequence variant" id="VAR_055108" description="In dbSNP:rs9847584.">
    <original>P</original>
    <variation>H</variation>
    <location>
        <position position="108"/>
    </location>
</feature>
<feature type="sequence variant" id="VAR_055109" description="In dbSNP:rs2073714.">
    <original>K</original>
    <variation>E</variation>
    <location>
        <position position="112"/>
    </location>
</feature>
<feature type="sequence variant" id="VAR_055110" description="In dbSNP:rs194685." evidence="4 5">
    <original>I</original>
    <variation>T</variation>
    <location>
        <position position="144"/>
    </location>
</feature>
<feature type="sequence variant" id="VAR_055111" description="In dbSNP:rs1078846.">
    <original>S</original>
    <variation>L</variation>
    <location>
        <position position="245"/>
    </location>
</feature>
<feature type="sequence variant" id="VAR_055112" description="In dbSNP:rs818818." evidence="4 5 6 7 9">
    <original>V</original>
    <variation>M</variation>
    <location>
        <position position="284"/>
    </location>
</feature>
<feature type="sequence variant" id="VAR_055113" description="In dbSNP:rs818817." evidence="4 5 6 7 9">
    <original>S</original>
    <variation>G</variation>
    <location>
        <position position="292"/>
    </location>
</feature>
<feature type="sequence variant" id="VAR_055114" description="In dbSNP:rs34256819.">
    <original>L</original>
    <variation>P</variation>
    <location>
        <position position="466"/>
    </location>
</feature>
<feature type="sequence variant" id="VAR_055115" description="In dbSNP:rs2070492.">
    <original>A</original>
    <variation>V</variation>
    <location>
        <position position="512"/>
    </location>
</feature>
<feature type="sequence variant" id="VAR_055116" description="In dbSNP:rs240033." evidence="6 7">
    <original>P</original>
    <variation>R</variation>
    <location>
        <position position="560"/>
    </location>
</feature>
<feature type="mutagenesis site" description="Strongly reduced riboflavin transport; when associated with A-395 and A-487." evidence="8">
    <original>W</original>
    <variation>A</variation>
    <location>
        <position position="388"/>
    </location>
</feature>
<feature type="mutagenesis site" description="Strongly reduced riboflavin transport; when associated with A-388 and A-487." evidence="8">
    <original>Y</original>
    <variation>A</variation>
    <location>
        <position position="395"/>
    </location>
</feature>
<feature type="mutagenesis site" description="Strongly reduced riboflavin transport; when associated with A-388 and A-395." evidence="8">
    <original>R</original>
    <variation>A</variation>
    <location>
        <position position="487"/>
    </location>
</feature>
<feature type="sequence conflict" description="In Ref. 1; BAA76351 and 2; BAA77626." evidence="13" ref="1 2">
    <original>G</original>
    <variation>W</variation>
    <location>
        <position position="282"/>
    </location>
</feature>
<feature type="sequence conflict" description="In Ref. 3; BAG37720." evidence="13" ref="3">
    <original>R</original>
    <variation>H</variation>
    <location>
        <position position="470"/>
    </location>
</feature>
<evidence type="ECO:0000250" key="1">
    <source>
        <dbReference type="UniProtKB" id="Q497L9"/>
    </source>
</evidence>
<evidence type="ECO:0000255" key="2"/>
<evidence type="ECO:0000256" key="3">
    <source>
        <dbReference type="SAM" id="MobiDB-lite"/>
    </source>
</evidence>
<evidence type="ECO:0000269" key="4">
    <source>
    </source>
</evidence>
<evidence type="ECO:0000269" key="5">
    <source>
    </source>
</evidence>
<evidence type="ECO:0000269" key="6">
    <source>
    </source>
</evidence>
<evidence type="ECO:0000269" key="7">
    <source>
    </source>
</evidence>
<evidence type="ECO:0000269" key="8">
    <source>
    </source>
</evidence>
<evidence type="ECO:0000269" key="9">
    <source ref="5"/>
</evidence>
<evidence type="ECO:0000303" key="10">
    <source>
    </source>
</evidence>
<evidence type="ECO:0000303" key="11">
    <source>
    </source>
</evidence>
<evidence type="ECO:0000303" key="12">
    <source>
    </source>
</evidence>
<evidence type="ECO:0000305" key="13"/>
<evidence type="ECO:0000312" key="14">
    <source>
        <dbReference type="HGNC" id="HGNC:8495"/>
    </source>
</evidence>
<protein>
    <recommendedName>
        <fullName evidence="12">Solute carrier family 22 member 14</fullName>
    </recommendedName>
    <alternativeName>
        <fullName evidence="10">Organic cation transporter-like 4</fullName>
        <shortName evidence="10">ORCTL-4</shortName>
    </alternativeName>
</protein>
<proteinExistence type="evidence at protein level"/>
<sequence>MAGEENFKEELRSQDASRNLNQHEVAGHPHSWSLEMLLRRLRAVHTKQDDKFANLLDAVGEFGTFQQRLVALTFIPSIMSAFFMFADHFVFTAQKPYCNTSWILAVGPHLSKAEQLNLTIPQAPNGSFLTCFMYLPVPWNLDSIIQFGLNDTDTCQDGWIYPDAKKRSLINEFDLVCGMETKKDTAQIMFMAGLPIGSLIFRLITDKMGRYPAILLSLLGLIIFGFGTAFMNSFHLYLFFRFGISQSVVGYAISSISLATEWLVGEHRAHAIILGHCFFAVGAVLLTGIAYSLPHWQLLFLVGGILVIPFISYIWILPESPRWLMMKGKVKEAKQVLCYAASVNKKTIPSNLLDELQLPRKKVTRASVLDFCKNRQLCKVTLVMSCVWFTVSYTYFTLSLRMRELGVSVHFRHVVPSIMEVPARLCCIFLLQQIGRKWSLAVTLLQAIIWCLLLLFLPEGEDGLRLKWPRCPATELKSMTILVLMLREFSLAATVTVFFLYTAELLPTVLRATGLGLVSLASVAGAILSLTIISQTPSLLPIFLCCVLAIVAFSLSSLLPETRDQPLSESLNHSSQIRNKVKDMKTKETSSDDV</sequence>
<comment type="function">
    <text evidence="1">Riboflavin transporter localized at the inner mitochondrial membrane of the spermatozoa midpiece, which is required for male fertility (By similarity). SLC22A14-mediated riboflavin transport is essential for spermatozoa energy generation and motility: riboflavin is the precursor of FMN and FAD, which are coenzymes of many enzymes in the TCA cycle (the citric acid cycle) in mitochondria (By similarity). Required for sperm motility and normal sperm flagellar structure (By similarity).</text>
</comment>
<comment type="catalytic activity">
    <reaction evidence="8">
        <text>riboflavin(in) = riboflavin(out)</text>
        <dbReference type="Rhea" id="RHEA:35015"/>
        <dbReference type="ChEBI" id="CHEBI:57986"/>
    </reaction>
</comment>
<comment type="interaction">
    <interactant intactId="EBI-12824155">
        <id>Q9Y267</id>
    </interactant>
    <interactant intactId="EBI-12806656">
        <id>Q96HJ5</id>
        <label>MS4A3</label>
    </interactant>
    <organismsDiffer>false</organismsDiffer>
    <experiments>4</experiments>
</comment>
<comment type="subcellular location">
    <subcellularLocation>
        <location evidence="8">Mitochondrion inner membrane</location>
        <topology evidence="2">Multi-pass membrane protein</topology>
    </subcellularLocation>
    <subcellularLocation>
        <location evidence="1">Cell projection</location>
        <location evidence="1">Cilium</location>
        <location evidence="1">Flagellum membrane</location>
        <topology evidence="2">Multi-pass membrane protein</topology>
    </subcellularLocation>
    <text evidence="1">Localizes to the principle piece of the sperm tail.</text>
</comment>
<comment type="tissue specificity">
    <text evidence="4">Ubiquitous.</text>
</comment>
<comment type="similarity">
    <text evidence="13">Belongs to the major facilitator (TC 2.A.1) superfamily. Organic cation transporter (TC 2.A.1.19) family.</text>
</comment>
<name>S22AE_HUMAN</name>
<dbReference type="EMBL" id="AB011082">
    <property type="protein sequence ID" value="BAA76351.1"/>
    <property type="molecule type" value="mRNA"/>
</dbReference>
<dbReference type="EMBL" id="AB026898">
    <property type="protein sequence ID" value="BAA77626.1"/>
    <property type="molecule type" value="Genomic_DNA"/>
</dbReference>
<dbReference type="EMBL" id="AK315317">
    <property type="protein sequence ID" value="BAG37720.1"/>
    <property type="molecule type" value="mRNA"/>
</dbReference>
<dbReference type="EMBL" id="AP006193">
    <property type="status" value="NOT_ANNOTATED_CDS"/>
    <property type="molecule type" value="Genomic_DNA"/>
</dbReference>
<dbReference type="EMBL" id="CH471055">
    <property type="protein sequence ID" value="EAW64529.1"/>
    <property type="molecule type" value="Genomic_DNA"/>
</dbReference>
<dbReference type="EMBL" id="BC075070">
    <property type="protein sequence ID" value="AAH75070.1"/>
    <property type="molecule type" value="mRNA"/>
</dbReference>
<dbReference type="EMBL" id="BC075071">
    <property type="protein sequence ID" value="AAH75071.1"/>
    <property type="molecule type" value="mRNA"/>
</dbReference>
<dbReference type="EMBL" id="BC126482">
    <property type="protein sequence ID" value="AAI26483.1"/>
    <property type="molecule type" value="mRNA"/>
</dbReference>
<dbReference type="EMBL" id="BC130543">
    <property type="protein sequence ID" value="AAI30544.1"/>
    <property type="molecule type" value="mRNA"/>
</dbReference>
<dbReference type="CCDS" id="CCDS2677.1"/>
<dbReference type="RefSeq" id="NP_001306962.1">
    <property type="nucleotide sequence ID" value="NM_001320033.2"/>
</dbReference>
<dbReference type="RefSeq" id="NP_004794.2">
    <property type="nucleotide sequence ID" value="NM_004803.4"/>
</dbReference>
<dbReference type="RefSeq" id="XP_005265642.1">
    <property type="nucleotide sequence ID" value="XM_005265585.4"/>
</dbReference>
<dbReference type="RefSeq" id="XP_011532547.1">
    <property type="nucleotide sequence ID" value="XM_011534245.2"/>
</dbReference>
<dbReference type="RefSeq" id="XP_047305192.1">
    <property type="nucleotide sequence ID" value="XM_047449236.1"/>
</dbReference>
<dbReference type="RefSeq" id="XP_047305193.1">
    <property type="nucleotide sequence ID" value="XM_047449237.1"/>
</dbReference>
<dbReference type="SMR" id="Q9Y267"/>
<dbReference type="BioGRID" id="114789">
    <property type="interactions" value="8"/>
</dbReference>
<dbReference type="FunCoup" id="Q9Y267">
    <property type="interactions" value="36"/>
</dbReference>
<dbReference type="IntAct" id="Q9Y267">
    <property type="interactions" value="3"/>
</dbReference>
<dbReference type="STRING" id="9606.ENSP00000273173"/>
<dbReference type="TCDB" id="2.A.1.19.22">
    <property type="family name" value="the major facilitator superfamily (mfs)"/>
</dbReference>
<dbReference type="GlyCosmos" id="Q9Y267">
    <property type="glycosylation" value="4 sites, No reported glycans"/>
</dbReference>
<dbReference type="GlyGen" id="Q9Y267">
    <property type="glycosylation" value="4 sites"/>
</dbReference>
<dbReference type="iPTMnet" id="Q9Y267"/>
<dbReference type="PhosphoSitePlus" id="Q9Y267"/>
<dbReference type="BioMuta" id="SLC22A14"/>
<dbReference type="DMDM" id="313104317"/>
<dbReference type="MassIVE" id="Q9Y267"/>
<dbReference type="PaxDb" id="9606-ENSP00000273173"/>
<dbReference type="PeptideAtlas" id="Q9Y267"/>
<dbReference type="ProteomicsDB" id="85672"/>
<dbReference type="Antibodypedia" id="28576">
    <property type="antibodies" value="40 antibodies from 13 providers"/>
</dbReference>
<dbReference type="DNASU" id="9389"/>
<dbReference type="Ensembl" id="ENST00000273173.4">
    <property type="protein sequence ID" value="ENSP00000273173.4"/>
    <property type="gene ID" value="ENSG00000144671.11"/>
</dbReference>
<dbReference type="Ensembl" id="ENST00000448498.6">
    <property type="protein sequence ID" value="ENSP00000396283.1"/>
    <property type="gene ID" value="ENSG00000144671.11"/>
</dbReference>
<dbReference type="GeneID" id="9389"/>
<dbReference type="KEGG" id="hsa:9389"/>
<dbReference type="MANE-Select" id="ENST00000448498.6">
    <property type="protein sequence ID" value="ENSP00000396283.1"/>
    <property type="RefSeq nucleotide sequence ID" value="NM_001320033.2"/>
    <property type="RefSeq protein sequence ID" value="NP_001306962.1"/>
</dbReference>
<dbReference type="UCSC" id="uc003cib.3">
    <property type="organism name" value="human"/>
</dbReference>
<dbReference type="AGR" id="HGNC:8495"/>
<dbReference type="CTD" id="9389"/>
<dbReference type="DisGeNET" id="9389"/>
<dbReference type="GeneCards" id="SLC22A14"/>
<dbReference type="HGNC" id="HGNC:8495">
    <property type="gene designation" value="SLC22A14"/>
</dbReference>
<dbReference type="HPA" id="ENSG00000144671">
    <property type="expression patterns" value="Tissue enriched (testis)"/>
</dbReference>
<dbReference type="MIM" id="604048">
    <property type="type" value="gene"/>
</dbReference>
<dbReference type="neXtProt" id="NX_Q9Y267"/>
<dbReference type="OpenTargets" id="ENSG00000144671"/>
<dbReference type="PharmGKB" id="PA32815"/>
<dbReference type="VEuPathDB" id="HostDB:ENSG00000144671"/>
<dbReference type="eggNOG" id="KOG0255">
    <property type="taxonomic scope" value="Eukaryota"/>
</dbReference>
<dbReference type="GeneTree" id="ENSGT00940000162395"/>
<dbReference type="HOGENOM" id="CLU_001265_33_3_1"/>
<dbReference type="InParanoid" id="Q9Y267"/>
<dbReference type="OMA" id="EHCFFSV"/>
<dbReference type="OrthoDB" id="5296287at2759"/>
<dbReference type="PAN-GO" id="Q9Y267">
    <property type="GO annotations" value="0 GO annotations based on evolutionary models"/>
</dbReference>
<dbReference type="PhylomeDB" id="Q9Y267"/>
<dbReference type="TreeFam" id="TF315847"/>
<dbReference type="PathwayCommons" id="Q9Y267"/>
<dbReference type="SignaLink" id="Q9Y267"/>
<dbReference type="BioGRID-ORCS" id="9389">
    <property type="hits" value="10 hits in 1136 CRISPR screens"/>
</dbReference>
<dbReference type="GenomeRNAi" id="9389"/>
<dbReference type="Pharos" id="Q9Y267">
    <property type="development level" value="Tdark"/>
</dbReference>
<dbReference type="PRO" id="PR:Q9Y267"/>
<dbReference type="Proteomes" id="UP000005640">
    <property type="component" value="Chromosome 3"/>
</dbReference>
<dbReference type="RNAct" id="Q9Y267">
    <property type="molecule type" value="protein"/>
</dbReference>
<dbReference type="Bgee" id="ENSG00000144671">
    <property type="expression patterns" value="Expressed in male germ line stem cell (sensu Vertebrata) in testis and 114 other cell types or tissues"/>
</dbReference>
<dbReference type="ExpressionAtlas" id="Q9Y267">
    <property type="expression patterns" value="baseline and differential"/>
</dbReference>
<dbReference type="GO" id="GO:0005743">
    <property type="term" value="C:mitochondrial inner membrane"/>
    <property type="evidence" value="ECO:0000314"/>
    <property type="project" value="UniProtKB"/>
</dbReference>
<dbReference type="GO" id="GO:0005886">
    <property type="term" value="C:plasma membrane"/>
    <property type="evidence" value="ECO:0007669"/>
    <property type="project" value="UniProtKB-KW"/>
</dbReference>
<dbReference type="GO" id="GO:0097228">
    <property type="term" value="C:sperm principal piece"/>
    <property type="evidence" value="ECO:0007669"/>
    <property type="project" value="Ensembl"/>
</dbReference>
<dbReference type="GO" id="GO:0032217">
    <property type="term" value="F:riboflavin transmembrane transporter activity"/>
    <property type="evidence" value="ECO:0000314"/>
    <property type="project" value="UniProtKB"/>
</dbReference>
<dbReference type="GO" id="GO:0030317">
    <property type="term" value="P:flagellated sperm motility"/>
    <property type="evidence" value="ECO:0007669"/>
    <property type="project" value="Ensembl"/>
</dbReference>
<dbReference type="GO" id="GO:0048240">
    <property type="term" value="P:sperm capacitation"/>
    <property type="evidence" value="ECO:0007669"/>
    <property type="project" value="Ensembl"/>
</dbReference>
<dbReference type="CDD" id="cd17374">
    <property type="entry name" value="MFS_OAT"/>
    <property type="match status" value="1"/>
</dbReference>
<dbReference type="Gene3D" id="1.20.1250.20">
    <property type="entry name" value="MFS general substrate transporter like domains"/>
    <property type="match status" value="1"/>
</dbReference>
<dbReference type="InterPro" id="IPR020846">
    <property type="entry name" value="MFS_dom"/>
</dbReference>
<dbReference type="InterPro" id="IPR005828">
    <property type="entry name" value="MFS_sugar_transport-like"/>
</dbReference>
<dbReference type="InterPro" id="IPR036259">
    <property type="entry name" value="MFS_trans_sf"/>
</dbReference>
<dbReference type="PANTHER" id="PTHR24064">
    <property type="entry name" value="SOLUTE CARRIER FAMILY 22 MEMBER"/>
    <property type="match status" value="1"/>
</dbReference>
<dbReference type="Pfam" id="PF00083">
    <property type="entry name" value="Sugar_tr"/>
    <property type="match status" value="1"/>
</dbReference>
<dbReference type="SUPFAM" id="SSF103473">
    <property type="entry name" value="MFS general substrate transporter"/>
    <property type="match status" value="1"/>
</dbReference>
<dbReference type="PROSITE" id="PS50850">
    <property type="entry name" value="MFS"/>
    <property type="match status" value="1"/>
</dbReference>
<gene>
    <name evidence="12 14" type="primary">SLC22A14</name>
    <name evidence="11" type="synonym">OCTL2</name>
    <name evidence="10" type="synonym">ORCTL4</name>
</gene>
<organism>
    <name type="scientific">Homo sapiens</name>
    <name type="common">Human</name>
    <dbReference type="NCBI Taxonomy" id="9606"/>
    <lineage>
        <taxon>Eukaryota</taxon>
        <taxon>Metazoa</taxon>
        <taxon>Chordata</taxon>
        <taxon>Craniata</taxon>
        <taxon>Vertebrata</taxon>
        <taxon>Euteleostomi</taxon>
        <taxon>Mammalia</taxon>
        <taxon>Eutheria</taxon>
        <taxon>Euarchontoglires</taxon>
        <taxon>Primates</taxon>
        <taxon>Haplorrhini</taxon>
        <taxon>Catarrhini</taxon>
        <taxon>Hominidae</taxon>
        <taxon>Homo</taxon>
    </lineage>
</organism>